<evidence type="ECO:0000255" key="1">
    <source>
        <dbReference type="HAMAP-Rule" id="MF_00221"/>
    </source>
</evidence>
<accession>Q5HGX9</accession>
<protein>
    <recommendedName>
        <fullName evidence="1">Divalent metal cation transporter MntH</fullName>
    </recommendedName>
</protein>
<gene>
    <name evidence="1" type="primary">mntH</name>
    <name type="ordered locus">SACOL1114</name>
</gene>
<organism>
    <name type="scientific">Staphylococcus aureus (strain COL)</name>
    <dbReference type="NCBI Taxonomy" id="93062"/>
    <lineage>
        <taxon>Bacteria</taxon>
        <taxon>Bacillati</taxon>
        <taxon>Bacillota</taxon>
        <taxon>Bacilli</taxon>
        <taxon>Bacillales</taxon>
        <taxon>Staphylococcaceae</taxon>
        <taxon>Staphylococcus</taxon>
    </lineage>
</organism>
<keyword id="KW-1003">Cell membrane</keyword>
<keyword id="KW-0406">Ion transport</keyword>
<keyword id="KW-0472">Membrane</keyword>
<keyword id="KW-0769">Symport</keyword>
<keyword id="KW-0812">Transmembrane</keyword>
<keyword id="KW-1133">Transmembrane helix</keyword>
<keyword id="KW-0813">Transport</keyword>
<name>MNTH_STAAC</name>
<reference key="1">
    <citation type="journal article" date="2005" name="J. Bacteriol.">
        <title>Insights on evolution of virulence and resistance from the complete genome analysis of an early methicillin-resistant Staphylococcus aureus strain and a biofilm-producing methicillin-resistant Staphylococcus epidermidis strain.</title>
        <authorList>
            <person name="Gill S.R."/>
            <person name="Fouts D.E."/>
            <person name="Archer G.L."/>
            <person name="Mongodin E.F."/>
            <person name="DeBoy R.T."/>
            <person name="Ravel J."/>
            <person name="Paulsen I.T."/>
            <person name="Kolonay J.F."/>
            <person name="Brinkac L.M."/>
            <person name="Beanan M.J."/>
            <person name="Dodson R.J."/>
            <person name="Daugherty S.C."/>
            <person name="Madupu R."/>
            <person name="Angiuoli S.V."/>
            <person name="Durkin A.S."/>
            <person name="Haft D.H."/>
            <person name="Vamathevan J.J."/>
            <person name="Khouri H."/>
            <person name="Utterback T.R."/>
            <person name="Lee C."/>
            <person name="Dimitrov G."/>
            <person name="Jiang L."/>
            <person name="Qin H."/>
            <person name="Weidman J."/>
            <person name="Tran K."/>
            <person name="Kang K.H."/>
            <person name="Hance I.R."/>
            <person name="Nelson K.E."/>
            <person name="Fraser C.M."/>
        </authorList>
    </citation>
    <scope>NUCLEOTIDE SEQUENCE [LARGE SCALE GENOMIC DNA]</scope>
    <source>
        <strain>COL</strain>
    </source>
</reference>
<sequence>MNNKRHSTNEQLSLDEINNTIKFDHRSSNKQKFLSFLGPGLLVAVGYMDPGNWITSMQGGAQYGYTLLFVILISSLSAMLLQSMTVRLGIATGMDLAQMTRHYLSRPIAIIFWIIAELAIIATDIAEVIGSAIALNLLFNIPLIVGALITVLDVFLLLFIMKYGFRKIEAIVGTLIFTVLFIFIFEVYISSPQLNAVLNGFIPHSEIITNNGILYIALGIIGATIMPHNLYLHSSIVQSRTYSRHNNEEKAQAIKFATIDSNIQLSIAFVVNCLLLVLGASLFFNSNADDLGGFYDLYHALKTEPVLGATMGAIMSTLFAVALLASGQNSTITGTLAGQIVMEGFLRLHIPNWLRRLITRSLAVIPVIVCLIIFKGNAAKIEQLLVFSQVFLSIALPFCLIPLQLATSNKDLMGPFYNKTWVNIISWTLIIILSILNVYLIVQTFQELQS</sequence>
<proteinExistence type="inferred from homology"/>
<feature type="chain" id="PRO_0000212634" description="Divalent metal cation transporter MntH">
    <location>
        <begin position="1"/>
        <end position="450"/>
    </location>
</feature>
<feature type="transmembrane region" description="Helical" evidence="1">
    <location>
        <begin position="34"/>
        <end position="54"/>
    </location>
</feature>
<feature type="transmembrane region" description="Helical" evidence="1">
    <location>
        <begin position="61"/>
        <end position="81"/>
    </location>
</feature>
<feature type="transmembrane region" description="Helical" evidence="1">
    <location>
        <begin position="108"/>
        <end position="128"/>
    </location>
</feature>
<feature type="transmembrane region" description="Helical" evidence="1">
    <location>
        <begin position="141"/>
        <end position="161"/>
    </location>
</feature>
<feature type="transmembrane region" description="Helical" evidence="1">
    <location>
        <begin position="170"/>
        <end position="190"/>
    </location>
</feature>
<feature type="transmembrane region" description="Helical" evidence="1">
    <location>
        <begin position="212"/>
        <end position="232"/>
    </location>
</feature>
<feature type="transmembrane region" description="Helical" evidence="1">
    <location>
        <begin position="263"/>
        <end position="283"/>
    </location>
</feature>
<feature type="transmembrane region" description="Helical" evidence="1">
    <location>
        <begin position="305"/>
        <end position="325"/>
    </location>
</feature>
<feature type="transmembrane region" description="Helical" evidence="1">
    <location>
        <begin position="361"/>
        <end position="381"/>
    </location>
</feature>
<feature type="transmembrane region" description="Helical" evidence="1">
    <location>
        <begin position="383"/>
        <end position="403"/>
    </location>
</feature>
<feature type="transmembrane region" description="Helical" evidence="1">
    <location>
        <begin position="422"/>
        <end position="442"/>
    </location>
</feature>
<comment type="function">
    <text evidence="1">H(+)-stimulated, divalent metal cation uptake system.</text>
</comment>
<comment type="subcellular location">
    <subcellularLocation>
        <location evidence="1">Cell membrane</location>
        <topology evidence="1">Multi-pass membrane protein</topology>
    </subcellularLocation>
</comment>
<comment type="similarity">
    <text evidence="1">Belongs to the NRAMP family.</text>
</comment>
<dbReference type="EMBL" id="CP000046">
    <property type="protein sequence ID" value="AAW37994.1"/>
    <property type="molecule type" value="Genomic_DNA"/>
</dbReference>
<dbReference type="RefSeq" id="WP_001060842.1">
    <property type="nucleotide sequence ID" value="NZ_JBGOFO010000002.1"/>
</dbReference>
<dbReference type="SMR" id="Q5HGX9"/>
<dbReference type="KEGG" id="sac:SACOL1114"/>
<dbReference type="HOGENOM" id="CLU_020088_2_0_9"/>
<dbReference type="Proteomes" id="UP000000530">
    <property type="component" value="Chromosome"/>
</dbReference>
<dbReference type="GO" id="GO:0005886">
    <property type="term" value="C:plasma membrane"/>
    <property type="evidence" value="ECO:0007669"/>
    <property type="project" value="UniProtKB-SubCell"/>
</dbReference>
<dbReference type="GO" id="GO:0015086">
    <property type="term" value="F:cadmium ion transmembrane transporter activity"/>
    <property type="evidence" value="ECO:0007669"/>
    <property type="project" value="TreeGrafter"/>
</dbReference>
<dbReference type="GO" id="GO:0005384">
    <property type="term" value="F:manganese ion transmembrane transporter activity"/>
    <property type="evidence" value="ECO:0007669"/>
    <property type="project" value="TreeGrafter"/>
</dbReference>
<dbReference type="GO" id="GO:0046872">
    <property type="term" value="F:metal ion binding"/>
    <property type="evidence" value="ECO:0007669"/>
    <property type="project" value="UniProtKB-UniRule"/>
</dbReference>
<dbReference type="GO" id="GO:0015293">
    <property type="term" value="F:symporter activity"/>
    <property type="evidence" value="ECO:0007669"/>
    <property type="project" value="UniProtKB-UniRule"/>
</dbReference>
<dbReference type="GO" id="GO:0034755">
    <property type="term" value="P:iron ion transmembrane transport"/>
    <property type="evidence" value="ECO:0007669"/>
    <property type="project" value="TreeGrafter"/>
</dbReference>
<dbReference type="HAMAP" id="MF_00221">
    <property type="entry name" value="NRAMP"/>
    <property type="match status" value="1"/>
</dbReference>
<dbReference type="InterPro" id="IPR001046">
    <property type="entry name" value="NRAMP_fam"/>
</dbReference>
<dbReference type="NCBIfam" id="TIGR01197">
    <property type="entry name" value="nramp"/>
    <property type="match status" value="1"/>
</dbReference>
<dbReference type="NCBIfam" id="NF037982">
    <property type="entry name" value="Nramp_1"/>
    <property type="match status" value="1"/>
</dbReference>
<dbReference type="NCBIfam" id="NF001923">
    <property type="entry name" value="PRK00701.1"/>
    <property type="match status" value="1"/>
</dbReference>
<dbReference type="PANTHER" id="PTHR11706:SF33">
    <property type="entry name" value="NATURAL RESISTANCE-ASSOCIATED MACROPHAGE PROTEIN 2"/>
    <property type="match status" value="1"/>
</dbReference>
<dbReference type="PANTHER" id="PTHR11706">
    <property type="entry name" value="SOLUTE CARRIER PROTEIN FAMILY 11 MEMBER"/>
    <property type="match status" value="1"/>
</dbReference>
<dbReference type="Pfam" id="PF01566">
    <property type="entry name" value="Nramp"/>
    <property type="match status" value="1"/>
</dbReference>
<dbReference type="PRINTS" id="PR00447">
    <property type="entry name" value="NATRESASSCMP"/>
</dbReference>